<sequence length="88" mass="9268">MAHKKGASSSRNGRDSAAHRLGVKRFGGQVVKAGEILVRQRGTKFHPGVNVGRGGDDTLFAKAAGAVEFGIKRGRKTINIVEPATQDA</sequence>
<organism>
    <name type="scientific">Mycobacterium ulcerans (strain Agy99)</name>
    <dbReference type="NCBI Taxonomy" id="362242"/>
    <lineage>
        <taxon>Bacteria</taxon>
        <taxon>Bacillati</taxon>
        <taxon>Actinomycetota</taxon>
        <taxon>Actinomycetes</taxon>
        <taxon>Mycobacteriales</taxon>
        <taxon>Mycobacteriaceae</taxon>
        <taxon>Mycobacterium</taxon>
        <taxon>Mycobacterium ulcerans group</taxon>
    </lineage>
</organism>
<evidence type="ECO:0000255" key="1">
    <source>
        <dbReference type="HAMAP-Rule" id="MF_00539"/>
    </source>
</evidence>
<evidence type="ECO:0000256" key="2">
    <source>
        <dbReference type="SAM" id="MobiDB-lite"/>
    </source>
</evidence>
<evidence type="ECO:0000305" key="3"/>
<gene>
    <name evidence="1" type="primary">rpmA</name>
    <name type="ordered locus">MUL_3713</name>
</gene>
<reference key="1">
    <citation type="journal article" date="2007" name="Genome Res.">
        <title>Reductive evolution and niche adaptation inferred from the genome of Mycobacterium ulcerans, the causative agent of Buruli ulcer.</title>
        <authorList>
            <person name="Stinear T.P."/>
            <person name="Seemann T."/>
            <person name="Pidot S."/>
            <person name="Frigui W."/>
            <person name="Reysset G."/>
            <person name="Garnier T."/>
            <person name="Meurice G."/>
            <person name="Simon D."/>
            <person name="Bouchier C."/>
            <person name="Ma L."/>
            <person name="Tichit M."/>
            <person name="Porter J.L."/>
            <person name="Ryan J."/>
            <person name="Johnson P.D.R."/>
            <person name="Davies J.K."/>
            <person name="Jenkin G.A."/>
            <person name="Small P.L.C."/>
            <person name="Jones L.M."/>
            <person name="Tekaia F."/>
            <person name="Laval F."/>
            <person name="Daffe M."/>
            <person name="Parkhill J."/>
            <person name="Cole S.T."/>
        </authorList>
    </citation>
    <scope>NUCLEOTIDE SEQUENCE [LARGE SCALE GENOMIC DNA]</scope>
    <source>
        <strain>Agy99</strain>
    </source>
</reference>
<protein>
    <recommendedName>
        <fullName evidence="1">Large ribosomal subunit protein bL27</fullName>
    </recommendedName>
    <alternativeName>
        <fullName evidence="3">50S ribosomal protein L27</fullName>
    </alternativeName>
</protein>
<dbReference type="EMBL" id="CP000325">
    <property type="protein sequence ID" value="ABL05835.1"/>
    <property type="molecule type" value="Genomic_DNA"/>
</dbReference>
<dbReference type="RefSeq" id="WP_011741440.1">
    <property type="nucleotide sequence ID" value="NC_008611.1"/>
</dbReference>
<dbReference type="SMR" id="A0PU16"/>
<dbReference type="KEGG" id="mul:MUL_3713"/>
<dbReference type="eggNOG" id="COG0211">
    <property type="taxonomic scope" value="Bacteria"/>
</dbReference>
<dbReference type="HOGENOM" id="CLU_095424_4_0_11"/>
<dbReference type="Proteomes" id="UP000000765">
    <property type="component" value="Chromosome"/>
</dbReference>
<dbReference type="GO" id="GO:0022625">
    <property type="term" value="C:cytosolic large ribosomal subunit"/>
    <property type="evidence" value="ECO:0007669"/>
    <property type="project" value="TreeGrafter"/>
</dbReference>
<dbReference type="GO" id="GO:0003735">
    <property type="term" value="F:structural constituent of ribosome"/>
    <property type="evidence" value="ECO:0007669"/>
    <property type="project" value="InterPro"/>
</dbReference>
<dbReference type="GO" id="GO:0006412">
    <property type="term" value="P:translation"/>
    <property type="evidence" value="ECO:0007669"/>
    <property type="project" value="UniProtKB-UniRule"/>
</dbReference>
<dbReference type="FunFam" id="2.40.50.100:FF:000020">
    <property type="entry name" value="50S ribosomal protein L27"/>
    <property type="match status" value="1"/>
</dbReference>
<dbReference type="Gene3D" id="2.40.50.100">
    <property type="match status" value="1"/>
</dbReference>
<dbReference type="HAMAP" id="MF_00539">
    <property type="entry name" value="Ribosomal_bL27"/>
    <property type="match status" value="1"/>
</dbReference>
<dbReference type="InterPro" id="IPR001684">
    <property type="entry name" value="Ribosomal_bL27"/>
</dbReference>
<dbReference type="InterPro" id="IPR018261">
    <property type="entry name" value="Ribosomal_bL27_CS"/>
</dbReference>
<dbReference type="NCBIfam" id="TIGR00062">
    <property type="entry name" value="L27"/>
    <property type="match status" value="1"/>
</dbReference>
<dbReference type="PANTHER" id="PTHR15893:SF0">
    <property type="entry name" value="LARGE RIBOSOMAL SUBUNIT PROTEIN BL27M"/>
    <property type="match status" value="1"/>
</dbReference>
<dbReference type="PANTHER" id="PTHR15893">
    <property type="entry name" value="RIBOSOMAL PROTEIN L27"/>
    <property type="match status" value="1"/>
</dbReference>
<dbReference type="Pfam" id="PF01016">
    <property type="entry name" value="Ribosomal_L27"/>
    <property type="match status" value="1"/>
</dbReference>
<dbReference type="PRINTS" id="PR00063">
    <property type="entry name" value="RIBOSOMALL27"/>
</dbReference>
<dbReference type="SUPFAM" id="SSF110324">
    <property type="entry name" value="Ribosomal L27 protein-like"/>
    <property type="match status" value="1"/>
</dbReference>
<dbReference type="PROSITE" id="PS00831">
    <property type="entry name" value="RIBOSOMAL_L27"/>
    <property type="match status" value="1"/>
</dbReference>
<keyword id="KW-0687">Ribonucleoprotein</keyword>
<keyword id="KW-0689">Ribosomal protein</keyword>
<comment type="similarity">
    <text evidence="1">Belongs to the bacterial ribosomal protein bL27 family.</text>
</comment>
<name>RL27_MYCUA</name>
<accession>A0PU16</accession>
<feature type="chain" id="PRO_1000017524" description="Large ribosomal subunit protein bL27">
    <location>
        <begin position="1"/>
        <end position="88"/>
    </location>
</feature>
<feature type="region of interest" description="Disordered" evidence="2">
    <location>
        <begin position="1"/>
        <end position="21"/>
    </location>
</feature>
<proteinExistence type="inferred from homology"/>